<sequence length="66" mass="7691">MPKQKTHRASAKRFKRTGSGGLKRFRAYTSHRFHGKTKKQRRHLRKAGMVHAGDFKRIKSMLTGLK</sequence>
<protein>
    <recommendedName>
        <fullName evidence="1">Large ribosomal subunit protein bL35</fullName>
    </recommendedName>
    <alternativeName>
        <fullName evidence="3">50S ribosomal protein L35</fullName>
    </alternativeName>
</protein>
<reference key="1">
    <citation type="journal article" date="2007" name="PLoS ONE">
        <title>A glimpse of streptococcal toxic shock syndrome from comparative genomics of S. suis 2 Chinese isolates.</title>
        <authorList>
            <person name="Chen C."/>
            <person name="Tang J."/>
            <person name="Dong W."/>
            <person name="Wang C."/>
            <person name="Feng Y."/>
            <person name="Wang J."/>
            <person name="Zheng F."/>
            <person name="Pan X."/>
            <person name="Liu D."/>
            <person name="Li M."/>
            <person name="Song Y."/>
            <person name="Zhu X."/>
            <person name="Sun H."/>
            <person name="Feng T."/>
            <person name="Guo Z."/>
            <person name="Ju A."/>
            <person name="Ge J."/>
            <person name="Dong Y."/>
            <person name="Sun W."/>
            <person name="Jiang Y."/>
            <person name="Wang J."/>
            <person name="Yan J."/>
            <person name="Yang H."/>
            <person name="Wang X."/>
            <person name="Gao G.F."/>
            <person name="Yang R."/>
            <person name="Wang J."/>
            <person name="Yu J."/>
        </authorList>
    </citation>
    <scope>NUCLEOTIDE SEQUENCE [LARGE SCALE GENOMIC DNA]</scope>
    <source>
        <strain>98HAH33</strain>
    </source>
</reference>
<evidence type="ECO:0000255" key="1">
    <source>
        <dbReference type="HAMAP-Rule" id="MF_00514"/>
    </source>
</evidence>
<evidence type="ECO:0000256" key="2">
    <source>
        <dbReference type="SAM" id="MobiDB-lite"/>
    </source>
</evidence>
<evidence type="ECO:0000305" key="3"/>
<keyword id="KW-0687">Ribonucleoprotein</keyword>
<keyword id="KW-0689">Ribosomal protein</keyword>
<dbReference type="EMBL" id="CP000408">
    <property type="protein sequence ID" value="ABP92441.1"/>
    <property type="molecule type" value="Genomic_DNA"/>
</dbReference>
<dbReference type="SMR" id="A4W252"/>
<dbReference type="KEGG" id="ssv:SSU98_1283"/>
<dbReference type="HOGENOM" id="CLU_169643_3_0_9"/>
<dbReference type="GO" id="GO:0022625">
    <property type="term" value="C:cytosolic large ribosomal subunit"/>
    <property type="evidence" value="ECO:0007669"/>
    <property type="project" value="TreeGrafter"/>
</dbReference>
<dbReference type="GO" id="GO:0003735">
    <property type="term" value="F:structural constituent of ribosome"/>
    <property type="evidence" value="ECO:0007669"/>
    <property type="project" value="InterPro"/>
</dbReference>
<dbReference type="GO" id="GO:0006412">
    <property type="term" value="P:translation"/>
    <property type="evidence" value="ECO:0007669"/>
    <property type="project" value="UniProtKB-UniRule"/>
</dbReference>
<dbReference type="FunFam" id="4.10.410.60:FF:000001">
    <property type="entry name" value="50S ribosomal protein L35"/>
    <property type="match status" value="1"/>
</dbReference>
<dbReference type="Gene3D" id="4.10.410.60">
    <property type="match status" value="1"/>
</dbReference>
<dbReference type="HAMAP" id="MF_00514">
    <property type="entry name" value="Ribosomal_bL35"/>
    <property type="match status" value="1"/>
</dbReference>
<dbReference type="InterPro" id="IPR001706">
    <property type="entry name" value="Ribosomal_bL35"/>
</dbReference>
<dbReference type="InterPro" id="IPR021137">
    <property type="entry name" value="Ribosomal_bL35-like"/>
</dbReference>
<dbReference type="InterPro" id="IPR018265">
    <property type="entry name" value="Ribosomal_bL35_CS"/>
</dbReference>
<dbReference type="InterPro" id="IPR037229">
    <property type="entry name" value="Ribosomal_bL35_sf"/>
</dbReference>
<dbReference type="NCBIfam" id="TIGR00001">
    <property type="entry name" value="rpmI_bact"/>
    <property type="match status" value="1"/>
</dbReference>
<dbReference type="PANTHER" id="PTHR33343">
    <property type="entry name" value="54S RIBOSOMAL PROTEIN BL35M"/>
    <property type="match status" value="1"/>
</dbReference>
<dbReference type="PANTHER" id="PTHR33343:SF1">
    <property type="entry name" value="LARGE RIBOSOMAL SUBUNIT PROTEIN BL35M"/>
    <property type="match status" value="1"/>
</dbReference>
<dbReference type="Pfam" id="PF01632">
    <property type="entry name" value="Ribosomal_L35p"/>
    <property type="match status" value="1"/>
</dbReference>
<dbReference type="PRINTS" id="PR00064">
    <property type="entry name" value="RIBOSOMALL35"/>
</dbReference>
<dbReference type="SUPFAM" id="SSF143034">
    <property type="entry name" value="L35p-like"/>
    <property type="match status" value="1"/>
</dbReference>
<dbReference type="PROSITE" id="PS00936">
    <property type="entry name" value="RIBOSOMAL_L35"/>
    <property type="match status" value="1"/>
</dbReference>
<name>RL35_STRS2</name>
<organism>
    <name type="scientific">Streptococcus suis (strain 98HAH33)</name>
    <dbReference type="NCBI Taxonomy" id="391296"/>
    <lineage>
        <taxon>Bacteria</taxon>
        <taxon>Bacillati</taxon>
        <taxon>Bacillota</taxon>
        <taxon>Bacilli</taxon>
        <taxon>Lactobacillales</taxon>
        <taxon>Streptococcaceae</taxon>
        <taxon>Streptococcus</taxon>
    </lineage>
</organism>
<comment type="similarity">
    <text evidence="1">Belongs to the bacterial ribosomal protein bL35 family.</text>
</comment>
<gene>
    <name evidence="1" type="primary">rpmI</name>
    <name type="ordered locus">SSU98_1283</name>
</gene>
<feature type="chain" id="PRO_1000050775" description="Large ribosomal subunit protein bL35">
    <location>
        <begin position="1"/>
        <end position="66"/>
    </location>
</feature>
<feature type="region of interest" description="Disordered" evidence="2">
    <location>
        <begin position="1"/>
        <end position="22"/>
    </location>
</feature>
<feature type="compositionally biased region" description="Basic residues" evidence="2">
    <location>
        <begin position="1"/>
        <end position="16"/>
    </location>
</feature>
<accession>A4W252</accession>
<proteinExistence type="inferred from homology"/>